<organism>
    <name type="scientific">Homo sapiens</name>
    <name type="common">Human</name>
    <dbReference type="NCBI Taxonomy" id="9606"/>
    <lineage>
        <taxon>Eukaryota</taxon>
        <taxon>Metazoa</taxon>
        <taxon>Chordata</taxon>
        <taxon>Craniata</taxon>
        <taxon>Vertebrata</taxon>
        <taxon>Euteleostomi</taxon>
        <taxon>Mammalia</taxon>
        <taxon>Eutheria</taxon>
        <taxon>Euarchontoglires</taxon>
        <taxon>Primates</taxon>
        <taxon>Haplorrhini</taxon>
        <taxon>Catarrhini</taxon>
        <taxon>Hominidae</taxon>
        <taxon>Homo</taxon>
    </lineage>
</organism>
<name>T2R43_HUMAN</name>
<keyword id="KW-1003">Cell membrane</keyword>
<keyword id="KW-0966">Cell projection</keyword>
<keyword id="KW-0969">Cilium</keyword>
<keyword id="KW-0297">G-protein coupled receptor</keyword>
<keyword id="KW-0325">Glycoprotein</keyword>
<keyword id="KW-0472">Membrane</keyword>
<keyword id="KW-0675">Receptor</keyword>
<keyword id="KW-1185">Reference proteome</keyword>
<keyword id="KW-0716">Sensory transduction</keyword>
<keyword id="KW-0919">Taste</keyword>
<keyword id="KW-0807">Transducer</keyword>
<keyword id="KW-0812">Transmembrane</keyword>
<keyword id="KW-1133">Transmembrane helix</keyword>
<accession>P59537</accession>
<accession>P59546</accession>
<accession>Q645X4</accession>
<feature type="chain" id="PRO_0000082302" description="Taste receptor type 2 member 43">
    <location>
        <begin position="1"/>
        <end position="309"/>
    </location>
</feature>
<feature type="topological domain" description="Extracellular" evidence="2">
    <location>
        <position position="1"/>
    </location>
</feature>
<feature type="transmembrane region" description="Helical; Name=1" evidence="2">
    <location>
        <begin position="2"/>
        <end position="22"/>
    </location>
</feature>
<feature type="topological domain" description="Cytoplasmic" evidence="2">
    <location>
        <begin position="23"/>
        <end position="46"/>
    </location>
</feature>
<feature type="transmembrane region" description="Helical; Name=2" evidence="2">
    <location>
        <begin position="47"/>
        <end position="67"/>
    </location>
</feature>
<feature type="topological domain" description="Extracellular" evidence="2">
    <location>
        <begin position="68"/>
        <end position="86"/>
    </location>
</feature>
<feature type="transmembrane region" description="Helical; Name=3" evidence="2">
    <location>
        <begin position="87"/>
        <end position="107"/>
    </location>
</feature>
<feature type="topological domain" description="Cytoplasmic" evidence="2">
    <location>
        <begin position="108"/>
        <end position="126"/>
    </location>
</feature>
<feature type="transmembrane region" description="Helical; Name=4" evidence="2">
    <location>
        <begin position="127"/>
        <end position="147"/>
    </location>
</feature>
<feature type="topological domain" description="Extracellular" evidence="2">
    <location>
        <begin position="148"/>
        <end position="178"/>
    </location>
</feature>
<feature type="transmembrane region" description="Helical; Name=5" evidence="2">
    <location>
        <begin position="179"/>
        <end position="199"/>
    </location>
</feature>
<feature type="topological domain" description="Cytoplasmic" evidence="2">
    <location>
        <begin position="200"/>
        <end position="229"/>
    </location>
</feature>
<feature type="transmembrane region" description="Helical; Name=6" evidence="2">
    <location>
        <begin position="230"/>
        <end position="250"/>
    </location>
</feature>
<feature type="topological domain" description="Extracellular" evidence="2">
    <location>
        <begin position="251"/>
        <end position="259"/>
    </location>
</feature>
<feature type="transmembrane region" description="Helical; Name=7" evidence="2">
    <location>
        <begin position="260"/>
        <end position="280"/>
    </location>
</feature>
<feature type="topological domain" description="Cytoplasmic" evidence="2">
    <location>
        <begin position="281"/>
        <end position="309"/>
    </location>
</feature>
<feature type="glycosylation site" description="N-linked (GlcNAc...) asparagine" evidence="2">
    <location>
        <position position="161"/>
    </location>
</feature>
<feature type="glycosylation site" description="N-linked (GlcNAc...) asparagine" evidence="2">
    <location>
        <position position="176"/>
    </location>
</feature>
<feature type="sequence conflict" description="In Ref. 1; AAM19328, 3; AAU21145 and 5; AAI17424." evidence="4" ref="1 3 5">
    <original>W</original>
    <variation>S</variation>
    <location>
        <position position="35"/>
    </location>
</feature>
<feature type="sequence conflict" description="In Ref. 1; AAM19328, 3; AAU21145 and 5; AAI17424." evidence="4" ref="1 3 5">
    <original>H</original>
    <variation>R</variation>
    <location>
        <position position="212"/>
    </location>
</feature>
<reference key="1">
    <citation type="journal article" date="2002" name="Nat. Genet.">
        <title>The human TAS2R16 receptor mediates bitter taste in response to beta-glucopyranosides.</title>
        <authorList>
            <person name="Bufe B."/>
            <person name="Hofmann T."/>
            <person name="Krautwurst D."/>
            <person name="Raguse J.-D."/>
            <person name="Meyerhof W."/>
        </authorList>
    </citation>
    <scope>NUCLEOTIDE SEQUENCE [GENOMIC DNA]</scope>
</reference>
<reference key="2">
    <citation type="journal article" date="2002" name="Cytogenet. Genome Res.">
        <title>Identification and characterization of human taste receptor genes belonging to the TAS2R family.</title>
        <authorList>
            <person name="Conte C."/>
            <person name="Ebeling M."/>
            <person name="Marcuz A."/>
            <person name="Nef P."/>
            <person name="Andres-Barquin P.J."/>
        </authorList>
    </citation>
    <scope>NUCLEOTIDE SEQUENCE [GENOMIC DNA]</scope>
</reference>
<reference key="3">
    <citation type="journal article" date="2005" name="Mol. Biol. Evol.">
        <title>Evolution of bitter taste receptors in humans and apes.</title>
        <authorList>
            <person name="Fischer A."/>
            <person name="Gilad Y."/>
            <person name="Man O."/>
            <person name="Paeaebo S."/>
        </authorList>
    </citation>
    <scope>NUCLEOTIDE SEQUENCE [GENOMIC DNA]</scope>
</reference>
<reference key="4">
    <citation type="journal article" date="2006" name="Nature">
        <title>The finished DNA sequence of human chromosome 12.</title>
        <authorList>
            <person name="Scherer S.E."/>
            <person name="Muzny D.M."/>
            <person name="Buhay C.J."/>
            <person name="Chen R."/>
            <person name="Cree A."/>
            <person name="Ding Y."/>
            <person name="Dugan-Rocha S."/>
            <person name="Gill R."/>
            <person name="Gunaratne P."/>
            <person name="Harris R.A."/>
            <person name="Hawes A.C."/>
            <person name="Hernandez J."/>
            <person name="Hodgson A.V."/>
            <person name="Hume J."/>
            <person name="Jackson A."/>
            <person name="Khan Z.M."/>
            <person name="Kovar-Smith C."/>
            <person name="Lewis L.R."/>
            <person name="Lozado R.J."/>
            <person name="Metzker M.L."/>
            <person name="Milosavljevic A."/>
            <person name="Miner G.R."/>
            <person name="Montgomery K.T."/>
            <person name="Morgan M.B."/>
            <person name="Nazareth L.V."/>
            <person name="Scott G."/>
            <person name="Sodergren E."/>
            <person name="Song X.-Z."/>
            <person name="Steffen D."/>
            <person name="Lovering R.C."/>
            <person name="Wheeler D.A."/>
            <person name="Worley K.C."/>
            <person name="Yuan Y."/>
            <person name="Zhang Z."/>
            <person name="Adams C.Q."/>
            <person name="Ansari-Lari M.A."/>
            <person name="Ayele M."/>
            <person name="Brown M.J."/>
            <person name="Chen G."/>
            <person name="Chen Z."/>
            <person name="Clerc-Blankenburg K.P."/>
            <person name="Davis C."/>
            <person name="Delgado O."/>
            <person name="Dinh H.H."/>
            <person name="Draper H."/>
            <person name="Gonzalez-Garay M.L."/>
            <person name="Havlak P."/>
            <person name="Jackson L.R."/>
            <person name="Jacob L.S."/>
            <person name="Kelly S.H."/>
            <person name="Li L."/>
            <person name="Li Z."/>
            <person name="Liu J."/>
            <person name="Liu W."/>
            <person name="Lu J."/>
            <person name="Maheshwari M."/>
            <person name="Nguyen B.-V."/>
            <person name="Okwuonu G.O."/>
            <person name="Pasternak S."/>
            <person name="Perez L.M."/>
            <person name="Plopper F.J.H."/>
            <person name="Santibanez J."/>
            <person name="Shen H."/>
            <person name="Tabor P.E."/>
            <person name="Verduzco D."/>
            <person name="Waldron L."/>
            <person name="Wang Q."/>
            <person name="Williams G.A."/>
            <person name="Zhang J."/>
            <person name="Zhou J."/>
            <person name="Allen C.C."/>
            <person name="Amin A.G."/>
            <person name="Anyalebechi V."/>
            <person name="Bailey M."/>
            <person name="Barbaria J.A."/>
            <person name="Bimage K.E."/>
            <person name="Bryant N.P."/>
            <person name="Burch P.E."/>
            <person name="Burkett C.E."/>
            <person name="Burrell K.L."/>
            <person name="Calderon E."/>
            <person name="Cardenas V."/>
            <person name="Carter K."/>
            <person name="Casias K."/>
            <person name="Cavazos I."/>
            <person name="Cavazos S.R."/>
            <person name="Ceasar H."/>
            <person name="Chacko J."/>
            <person name="Chan S.N."/>
            <person name="Chavez D."/>
            <person name="Christopoulos C."/>
            <person name="Chu J."/>
            <person name="Cockrell R."/>
            <person name="Cox C.D."/>
            <person name="Dang M."/>
            <person name="Dathorne S.R."/>
            <person name="David R."/>
            <person name="Davis C.M."/>
            <person name="Davy-Carroll L."/>
            <person name="Deshazo D.R."/>
            <person name="Donlin J.E."/>
            <person name="D'Souza L."/>
            <person name="Eaves K.A."/>
            <person name="Egan A."/>
            <person name="Emery-Cohen A.J."/>
            <person name="Escotto M."/>
            <person name="Flagg N."/>
            <person name="Forbes L.D."/>
            <person name="Gabisi A.M."/>
            <person name="Garza M."/>
            <person name="Hamilton C."/>
            <person name="Henderson N."/>
            <person name="Hernandez O."/>
            <person name="Hines S."/>
            <person name="Hogues M.E."/>
            <person name="Huang M."/>
            <person name="Idlebird D.G."/>
            <person name="Johnson R."/>
            <person name="Jolivet A."/>
            <person name="Jones S."/>
            <person name="Kagan R."/>
            <person name="King L.M."/>
            <person name="Leal B."/>
            <person name="Lebow H."/>
            <person name="Lee S."/>
            <person name="LeVan J.M."/>
            <person name="Lewis L.C."/>
            <person name="London P."/>
            <person name="Lorensuhewa L.M."/>
            <person name="Loulseged H."/>
            <person name="Lovett D.A."/>
            <person name="Lucier A."/>
            <person name="Lucier R.L."/>
            <person name="Ma J."/>
            <person name="Madu R.C."/>
            <person name="Mapua P."/>
            <person name="Martindale A.D."/>
            <person name="Martinez E."/>
            <person name="Massey E."/>
            <person name="Mawhiney S."/>
            <person name="Meador M.G."/>
            <person name="Mendez S."/>
            <person name="Mercado C."/>
            <person name="Mercado I.C."/>
            <person name="Merritt C.E."/>
            <person name="Miner Z.L."/>
            <person name="Minja E."/>
            <person name="Mitchell T."/>
            <person name="Mohabbat F."/>
            <person name="Mohabbat K."/>
            <person name="Montgomery B."/>
            <person name="Moore N."/>
            <person name="Morris S."/>
            <person name="Munidasa M."/>
            <person name="Ngo R.N."/>
            <person name="Nguyen N.B."/>
            <person name="Nickerson E."/>
            <person name="Nwaokelemeh O.O."/>
            <person name="Nwokenkwo S."/>
            <person name="Obregon M."/>
            <person name="Oguh M."/>
            <person name="Oragunye N."/>
            <person name="Oviedo R.J."/>
            <person name="Parish B.J."/>
            <person name="Parker D.N."/>
            <person name="Parrish J."/>
            <person name="Parks K.L."/>
            <person name="Paul H.A."/>
            <person name="Payton B.A."/>
            <person name="Perez A."/>
            <person name="Perrin W."/>
            <person name="Pickens A."/>
            <person name="Primus E.L."/>
            <person name="Pu L.-L."/>
            <person name="Puazo M."/>
            <person name="Quiles M.M."/>
            <person name="Quiroz J.B."/>
            <person name="Rabata D."/>
            <person name="Reeves K."/>
            <person name="Ruiz S.J."/>
            <person name="Shao H."/>
            <person name="Sisson I."/>
            <person name="Sonaike T."/>
            <person name="Sorelle R.P."/>
            <person name="Sutton A.E."/>
            <person name="Svatek A.F."/>
            <person name="Svetz L.A."/>
            <person name="Tamerisa K.S."/>
            <person name="Taylor T.R."/>
            <person name="Teague B."/>
            <person name="Thomas N."/>
            <person name="Thorn R.D."/>
            <person name="Trejos Z.Y."/>
            <person name="Trevino B.K."/>
            <person name="Ukegbu O.N."/>
            <person name="Urban J.B."/>
            <person name="Vasquez L.I."/>
            <person name="Vera V.A."/>
            <person name="Villasana D.M."/>
            <person name="Wang L."/>
            <person name="Ward-Moore S."/>
            <person name="Warren J.T."/>
            <person name="Wei X."/>
            <person name="White F."/>
            <person name="Williamson A.L."/>
            <person name="Wleczyk R."/>
            <person name="Wooden H.S."/>
            <person name="Wooden S.H."/>
            <person name="Yen J."/>
            <person name="Yoon L."/>
            <person name="Yoon V."/>
            <person name="Zorrilla S.E."/>
            <person name="Nelson D."/>
            <person name="Kucherlapati R."/>
            <person name="Weinstock G."/>
            <person name="Gibbs R.A."/>
        </authorList>
    </citation>
    <scope>NUCLEOTIDE SEQUENCE [LARGE SCALE GENOMIC DNA]</scope>
</reference>
<reference key="5">
    <citation type="journal article" date="2004" name="Genome Res.">
        <title>The status, quality, and expansion of the NIH full-length cDNA project: the Mammalian Gene Collection (MGC).</title>
        <authorList>
            <consortium name="The MGC Project Team"/>
        </authorList>
    </citation>
    <scope>NUCLEOTIDE SEQUENCE [LARGE SCALE MRNA]</scope>
    <source>
        <tissue>Brain</tissue>
    </source>
</reference>
<reference key="6">
    <citation type="journal article" date="2002" name="Curr. Opin. Neurobiol.">
        <title>Receptors for bitter and sweet taste.</title>
        <authorList>
            <person name="Montmayeur J.-P."/>
            <person name="Matsunami H."/>
        </authorList>
    </citation>
    <scope>REVIEW</scope>
</reference>
<reference key="7">
    <citation type="journal article" date="2002" name="J. Biol. Chem.">
        <title>Molecular mechanisms of bitter and sweet taste transduction.</title>
        <authorList>
            <person name="Margolskee R.F."/>
        </authorList>
    </citation>
    <scope>REVIEW</scope>
</reference>
<reference key="8">
    <citation type="journal article" date="2003" name="Cell">
        <title>Coding of sweet, bitter, and umami tastes: different receptor cells sharing similar signaling pathways.</title>
        <authorList>
            <person name="Zhang Y."/>
            <person name="Hoon M.A."/>
            <person name="Chandrashekar J."/>
            <person name="Mueller K.L."/>
            <person name="Cook B."/>
            <person name="Wu D."/>
            <person name="Zuker C.S."/>
            <person name="Ryba N.J."/>
        </authorList>
    </citation>
    <scope>REVIEW</scope>
</reference>
<reference key="9">
    <citation type="journal article" date="2004" name="J. Neurosci.">
        <title>Bitter taste receptors for saccharin and acesulfame K.</title>
        <authorList>
            <person name="Kuhn C."/>
            <person name="Bufe B."/>
            <person name="Winnig M."/>
            <person name="Hofmann T."/>
            <person name="Frank O."/>
            <person name="Behrens M."/>
            <person name="Lewtschenko T."/>
            <person name="Slack J.P."/>
            <person name="Ward C.D."/>
            <person name="Meyerhof W."/>
        </authorList>
    </citation>
    <scope>ACTIVATION BY SACCHARIN AND ACESULFAME K</scope>
</reference>
<reference key="10">
    <citation type="journal article" date="2009" name="Science">
        <title>Motile cilia of human airway epithelia are chemosensory.</title>
        <authorList>
            <person name="Shah A.S."/>
            <person name="Ben-Shahar Y."/>
            <person name="Moninger T.O."/>
            <person name="Kline J.N."/>
            <person name="Welsh M.J."/>
        </authorList>
    </citation>
    <scope>SUBCELLULAR LOCATION</scope>
    <scope>TISSUE SPECIFICITY</scope>
</reference>
<protein>
    <recommendedName>
        <fullName>Taste receptor type 2 member 43</fullName>
        <shortName>T2R43</shortName>
    </recommendedName>
    <alternativeName>
        <fullName>Taste receptor type 2 member 52</fullName>
        <shortName>T2R52</shortName>
    </alternativeName>
</protein>
<proteinExistence type="evidence at transcript level"/>
<comment type="function">
    <text evidence="1">Gustducin-coupled receptor immplicated in the perception of bitter compounds in the oral cavity and the gastrointestinal tract. Signals through PLCB2 and the calcium-regulated cation channel TRPM5. Activated by the sulfonyl amide sweeteners saccharin and acesulfame K. In airway epithelial cells, binding of bitter compounds increases the intracellular calcium ion concentration and stimulates ciliary beat frequency. May act as chemosensory receptors in airway epithelial cells to detect and eliminate potential noxious agents from the airways (By similarity).</text>
</comment>
<comment type="subcellular location">
    <subcellularLocation>
        <location evidence="3">Membrane</location>
        <topology evidence="3">Multi-pass membrane protein</topology>
    </subcellularLocation>
    <subcellularLocation>
        <location evidence="3">Cell projection</location>
        <location evidence="3">Cilium membrane</location>
    </subcellularLocation>
    <text>In airway epithelial cells, localizes to motile cilia.</text>
</comment>
<comment type="tissue specificity">
    <text evidence="3">Expressed in subsets of taste receptor cells of the tongue and exclusively in gustducin-positive cells. Expressed in airway epithelia.</text>
</comment>
<comment type="miscellaneous">
    <text>Most taste cells may be activated by a limited number of bitter compounds; individual taste cells can discriminate among bitter stimuli.</text>
</comment>
<comment type="similarity">
    <text evidence="4">Belongs to the G-protein coupled receptor T2R family.</text>
</comment>
<comment type="online information" name="Protein Spotlight">
    <link uri="https://www.proteinspotlight.org/back_issues/119"/>
    <text>A tail of protection - Issue 119 of July 2010</text>
</comment>
<gene>
    <name type="primary">TAS2R43</name>
</gene>
<dbReference type="EMBL" id="AF494237">
    <property type="protein sequence ID" value="AAM19328.1"/>
    <property type="molecule type" value="Genomic_DNA"/>
</dbReference>
<dbReference type="EMBL" id="AY114089">
    <property type="protein sequence ID" value="AAM63539.1"/>
    <property type="molecule type" value="Genomic_DNA"/>
</dbReference>
<dbReference type="EMBL" id="AY724943">
    <property type="protein sequence ID" value="AAU21145.1"/>
    <property type="molecule type" value="Genomic_DNA"/>
</dbReference>
<dbReference type="EMBL" id="AC018630">
    <property type="status" value="NOT_ANNOTATED_CDS"/>
    <property type="molecule type" value="Genomic_DNA"/>
</dbReference>
<dbReference type="EMBL" id="BC117423">
    <property type="protein sequence ID" value="AAI17424.1"/>
    <property type="molecule type" value="mRNA"/>
</dbReference>
<dbReference type="CCDS" id="CCDS53749.1"/>
<dbReference type="RefSeq" id="NP_795365.2">
    <property type="nucleotide sequence ID" value="NM_176884.2"/>
</dbReference>
<dbReference type="SMR" id="P59537"/>
<dbReference type="BioGRID" id="129244">
    <property type="interactions" value="2"/>
</dbReference>
<dbReference type="FunCoup" id="P59537">
    <property type="interactions" value="162"/>
</dbReference>
<dbReference type="STRING" id="9606.ENSP00000431719"/>
<dbReference type="ChEMBL" id="CHEMBL4523251"/>
<dbReference type="DrugCentral" id="P59537"/>
<dbReference type="GuidetoPHARMACOLOGY" id="678"/>
<dbReference type="GlyCosmos" id="P59537">
    <property type="glycosylation" value="2 sites, No reported glycans"/>
</dbReference>
<dbReference type="GlyGen" id="P59537">
    <property type="glycosylation" value="2 sites"/>
</dbReference>
<dbReference type="BioMuta" id="TAS2R43"/>
<dbReference type="DMDM" id="374095447"/>
<dbReference type="PaxDb" id="9606-ENSP00000431719"/>
<dbReference type="Antibodypedia" id="57634">
    <property type="antibodies" value="84 antibodies from 17 providers"/>
</dbReference>
<dbReference type="DNASU" id="259289"/>
<dbReference type="Ensembl" id="ENST00000531678.1">
    <property type="protein sequence ID" value="ENSP00000431719.1"/>
    <property type="gene ID" value="ENSG00000255374.3"/>
</dbReference>
<dbReference type="Ensembl" id="ENST00000571879.1">
    <property type="protein sequence ID" value="ENSP00000458723.1"/>
    <property type="gene ID" value="ENSG00000262612.3"/>
</dbReference>
<dbReference type="GeneID" id="259289"/>
<dbReference type="KEGG" id="hsa:259289"/>
<dbReference type="MANE-Select" id="ENST00000531678.1">
    <property type="protein sequence ID" value="ENSP00000431719.1"/>
    <property type="RefSeq nucleotide sequence ID" value="NM_176884.2"/>
    <property type="RefSeq protein sequence ID" value="NP_795365.2"/>
</dbReference>
<dbReference type="UCSC" id="uc001qzq.1">
    <property type="organism name" value="human"/>
</dbReference>
<dbReference type="AGR" id="HGNC:18875"/>
<dbReference type="CTD" id="259289"/>
<dbReference type="DisGeNET" id="259289"/>
<dbReference type="GeneCards" id="TAS2R43"/>
<dbReference type="HGNC" id="HGNC:18875">
    <property type="gene designation" value="TAS2R43"/>
</dbReference>
<dbReference type="HPA" id="ENSG00000255374">
    <property type="expression patterns" value="Not detected"/>
</dbReference>
<dbReference type="MIM" id="612668">
    <property type="type" value="gene"/>
</dbReference>
<dbReference type="neXtProt" id="NX_P59537"/>
<dbReference type="PharmGKB" id="PA38729"/>
<dbReference type="VEuPathDB" id="HostDB:ENSG00000255374"/>
<dbReference type="eggNOG" id="ENOG502TE6U">
    <property type="taxonomic scope" value="Eukaryota"/>
</dbReference>
<dbReference type="GeneTree" id="ENSGT01100000263477"/>
<dbReference type="InParanoid" id="P59537"/>
<dbReference type="OMA" id="IRIMYPS"/>
<dbReference type="OrthoDB" id="8876749at2759"/>
<dbReference type="PAN-GO" id="P59537">
    <property type="GO annotations" value="3 GO annotations based on evolutionary models"/>
</dbReference>
<dbReference type="PhylomeDB" id="P59537"/>
<dbReference type="TreeFam" id="TF335891"/>
<dbReference type="PathwayCommons" id="P59537"/>
<dbReference type="Reactome" id="R-HSA-418594">
    <property type="pathway name" value="G alpha (i) signalling events"/>
</dbReference>
<dbReference type="Reactome" id="R-HSA-420499">
    <property type="pathway name" value="Class C/3 (Metabotropic glutamate/pheromone receptors)"/>
</dbReference>
<dbReference type="Reactome" id="R-HSA-9717207">
    <property type="pathway name" value="Sensory perception of sweet, bitter, and umami (glutamate) taste"/>
</dbReference>
<dbReference type="BioGRID-ORCS" id="259289">
    <property type="hits" value="15 hits in 1062 CRISPR screens"/>
</dbReference>
<dbReference type="GeneWiki" id="TAS2R43"/>
<dbReference type="GenomeRNAi" id="259289"/>
<dbReference type="Pharos" id="P59537">
    <property type="development level" value="Tchem"/>
</dbReference>
<dbReference type="PRO" id="PR:P59537"/>
<dbReference type="Proteomes" id="UP000005640">
    <property type="component" value="Chromosome 12"/>
</dbReference>
<dbReference type="RNAct" id="P59537">
    <property type="molecule type" value="protein"/>
</dbReference>
<dbReference type="Bgee" id="ENSG00000255374">
    <property type="expression patterns" value="Expressed in male germ line stem cell (sensu Vertebrata) in testis and 72 other cell types or tissues"/>
</dbReference>
<dbReference type="GO" id="GO:0060170">
    <property type="term" value="C:ciliary membrane"/>
    <property type="evidence" value="ECO:0007669"/>
    <property type="project" value="UniProtKB-SubCell"/>
</dbReference>
<dbReference type="GO" id="GO:0016020">
    <property type="term" value="C:membrane"/>
    <property type="evidence" value="ECO:0000318"/>
    <property type="project" value="GO_Central"/>
</dbReference>
<dbReference type="GO" id="GO:0031514">
    <property type="term" value="C:motile cilium"/>
    <property type="evidence" value="ECO:0000314"/>
    <property type="project" value="UniProtKB"/>
</dbReference>
<dbReference type="GO" id="GO:0005886">
    <property type="term" value="C:plasma membrane"/>
    <property type="evidence" value="ECO:0000304"/>
    <property type="project" value="Reactome"/>
</dbReference>
<dbReference type="GO" id="GO:0033038">
    <property type="term" value="F:bitter taste receptor activity"/>
    <property type="evidence" value="ECO:0000314"/>
    <property type="project" value="UniProtKB"/>
</dbReference>
<dbReference type="GO" id="GO:0004930">
    <property type="term" value="F:G protein-coupled receptor activity"/>
    <property type="evidence" value="ECO:0007669"/>
    <property type="project" value="UniProtKB-KW"/>
</dbReference>
<dbReference type="GO" id="GO:0008527">
    <property type="term" value="F:taste receptor activity"/>
    <property type="evidence" value="ECO:0000314"/>
    <property type="project" value="HGNC-UCL"/>
</dbReference>
<dbReference type="GO" id="GO:0001580">
    <property type="term" value="P:detection of chemical stimulus involved in sensory perception of bitter taste"/>
    <property type="evidence" value="ECO:0000314"/>
    <property type="project" value="UniProtKB"/>
</dbReference>
<dbReference type="GO" id="GO:0007186">
    <property type="term" value="P:G protein-coupled receptor signaling pathway"/>
    <property type="evidence" value="ECO:0000305"/>
    <property type="project" value="HGNC-UCL"/>
</dbReference>
<dbReference type="CDD" id="cd15027">
    <property type="entry name" value="7tm_TAS2R43-like"/>
    <property type="match status" value="1"/>
</dbReference>
<dbReference type="FunFam" id="1.20.1070.10:FF:000042">
    <property type="entry name" value="Taste receptor type 2 member 7"/>
    <property type="match status" value="1"/>
</dbReference>
<dbReference type="Gene3D" id="1.20.1070.10">
    <property type="entry name" value="Rhodopsin 7-helix transmembrane proteins"/>
    <property type="match status" value="1"/>
</dbReference>
<dbReference type="InterPro" id="IPR007960">
    <property type="entry name" value="TAS2R"/>
</dbReference>
<dbReference type="PANTHER" id="PTHR11394">
    <property type="entry name" value="TASTE RECEPTOR TYPE 2"/>
    <property type="match status" value="1"/>
</dbReference>
<dbReference type="PANTHER" id="PTHR11394:SF127">
    <property type="entry name" value="TASTE RECEPTOR TYPE 2 MEMBER 43"/>
    <property type="match status" value="1"/>
</dbReference>
<dbReference type="Pfam" id="PF05296">
    <property type="entry name" value="TAS2R"/>
    <property type="match status" value="1"/>
</dbReference>
<dbReference type="SUPFAM" id="SSF81321">
    <property type="entry name" value="Family A G protein-coupled receptor-like"/>
    <property type="match status" value="1"/>
</dbReference>
<sequence>MITFLPIIFSSLVVVTFVIGNFANGFIALVNSIEWFKRQKISFADQILTALAVSRVGLLWVLLLNWYSTVLNPAFNSVEVRTTAYNIWAVINHFSNWLATTLSIFYLLKIANFSNFIFLHLKRRVKSVILVMLLGPLLFLACHLFVINMNEIVRTKEFEGNMTWKIKLKSAMYFSNMTVTMVANLVPFTLTLLSFMLLICSLCKHLKKMQLHGKGSQDPSTKVHIKALQTVISFLLLCAIYFLSIMISVWSFGSLENKPVFMFCKAIRFSYPSIHPFILIWGNKKLKQTFLSVFWQMRYWVKGEKTSSP</sequence>
<evidence type="ECO:0000250" key="1"/>
<evidence type="ECO:0000255" key="2"/>
<evidence type="ECO:0000269" key="3">
    <source>
    </source>
</evidence>
<evidence type="ECO:0000305" key="4"/>